<evidence type="ECO:0000255" key="1">
    <source>
        <dbReference type="HAMAP-Rule" id="MF_00073"/>
    </source>
</evidence>
<gene>
    <name evidence="1" type="primary">nusB</name>
    <name type="ordered locus">NT01EI_1058</name>
</gene>
<name>NUSB_EDWI9</name>
<keyword id="KW-0694">RNA-binding</keyword>
<keyword id="KW-0804">Transcription</keyword>
<keyword id="KW-0889">Transcription antitermination</keyword>
<keyword id="KW-0805">Transcription regulation</keyword>
<dbReference type="EMBL" id="CP001600">
    <property type="protein sequence ID" value="ACR68270.1"/>
    <property type="molecule type" value="Genomic_DNA"/>
</dbReference>
<dbReference type="RefSeq" id="WP_015870451.1">
    <property type="nucleotide sequence ID" value="NZ_CP169062.1"/>
</dbReference>
<dbReference type="SMR" id="C5BCH6"/>
<dbReference type="STRING" id="67780.B6E78_15660"/>
<dbReference type="GeneID" id="69538092"/>
<dbReference type="KEGG" id="eic:NT01EI_1058"/>
<dbReference type="PATRIC" id="fig|634503.3.peg.958"/>
<dbReference type="HOGENOM" id="CLU_087843_4_1_6"/>
<dbReference type="OrthoDB" id="9789556at2"/>
<dbReference type="Proteomes" id="UP000001485">
    <property type="component" value="Chromosome"/>
</dbReference>
<dbReference type="GO" id="GO:0005829">
    <property type="term" value="C:cytosol"/>
    <property type="evidence" value="ECO:0007669"/>
    <property type="project" value="TreeGrafter"/>
</dbReference>
<dbReference type="GO" id="GO:0003723">
    <property type="term" value="F:RNA binding"/>
    <property type="evidence" value="ECO:0007669"/>
    <property type="project" value="UniProtKB-UniRule"/>
</dbReference>
<dbReference type="GO" id="GO:0006353">
    <property type="term" value="P:DNA-templated transcription termination"/>
    <property type="evidence" value="ECO:0007669"/>
    <property type="project" value="UniProtKB-UniRule"/>
</dbReference>
<dbReference type="GO" id="GO:0031564">
    <property type="term" value="P:transcription antitermination"/>
    <property type="evidence" value="ECO:0007669"/>
    <property type="project" value="UniProtKB-KW"/>
</dbReference>
<dbReference type="CDD" id="cd00619">
    <property type="entry name" value="Terminator_NusB"/>
    <property type="match status" value="1"/>
</dbReference>
<dbReference type="FunFam" id="1.10.940.10:FF:000001">
    <property type="entry name" value="Transcription antitermination factor NusB"/>
    <property type="match status" value="1"/>
</dbReference>
<dbReference type="Gene3D" id="1.10.940.10">
    <property type="entry name" value="NusB-like"/>
    <property type="match status" value="1"/>
</dbReference>
<dbReference type="HAMAP" id="MF_00073">
    <property type="entry name" value="NusB"/>
    <property type="match status" value="1"/>
</dbReference>
<dbReference type="InterPro" id="IPR035926">
    <property type="entry name" value="NusB-like_sf"/>
</dbReference>
<dbReference type="InterPro" id="IPR011605">
    <property type="entry name" value="NusB_fam"/>
</dbReference>
<dbReference type="InterPro" id="IPR006027">
    <property type="entry name" value="NusB_RsmB_TIM44"/>
</dbReference>
<dbReference type="NCBIfam" id="TIGR01951">
    <property type="entry name" value="nusB"/>
    <property type="match status" value="1"/>
</dbReference>
<dbReference type="PANTHER" id="PTHR11078:SF3">
    <property type="entry name" value="ANTITERMINATION NUSB DOMAIN-CONTAINING PROTEIN"/>
    <property type="match status" value="1"/>
</dbReference>
<dbReference type="PANTHER" id="PTHR11078">
    <property type="entry name" value="N UTILIZATION SUBSTANCE PROTEIN B-RELATED"/>
    <property type="match status" value="1"/>
</dbReference>
<dbReference type="Pfam" id="PF01029">
    <property type="entry name" value="NusB"/>
    <property type="match status" value="1"/>
</dbReference>
<dbReference type="SUPFAM" id="SSF48013">
    <property type="entry name" value="NusB-like"/>
    <property type="match status" value="1"/>
</dbReference>
<sequence length="139" mass="15784">MKPAARRRARECAVQALYSWQISKNDIADVEYQFLSEQDVKDVDVNYFRELLSGVASNAEYLDGLMAPVLSRQLDELGQVERAILRVSIYELSKRQDVPYKVAINEGIELAKIFGAEDSHKFVNGVLDKVAPQVRPNRK</sequence>
<accession>C5BCH6</accession>
<protein>
    <recommendedName>
        <fullName evidence="1">Transcription antitermination protein NusB</fullName>
    </recommendedName>
    <alternativeName>
        <fullName evidence="1">Antitermination factor NusB</fullName>
    </alternativeName>
</protein>
<comment type="function">
    <text evidence="1">Involved in transcription antitermination. Required for transcription of ribosomal RNA (rRNA) genes. Binds specifically to the boxA antiterminator sequence of the ribosomal RNA (rrn) operons.</text>
</comment>
<comment type="similarity">
    <text evidence="1">Belongs to the NusB family.</text>
</comment>
<proteinExistence type="inferred from homology"/>
<organism>
    <name type="scientific">Edwardsiella ictaluri (strain 93-146)</name>
    <dbReference type="NCBI Taxonomy" id="634503"/>
    <lineage>
        <taxon>Bacteria</taxon>
        <taxon>Pseudomonadati</taxon>
        <taxon>Pseudomonadota</taxon>
        <taxon>Gammaproteobacteria</taxon>
        <taxon>Enterobacterales</taxon>
        <taxon>Hafniaceae</taxon>
        <taxon>Edwardsiella</taxon>
    </lineage>
</organism>
<feature type="chain" id="PRO_1000202478" description="Transcription antitermination protein NusB">
    <location>
        <begin position="1"/>
        <end position="139"/>
    </location>
</feature>
<reference key="1">
    <citation type="submission" date="2009-03" db="EMBL/GenBank/DDBJ databases">
        <title>Complete genome sequence of Edwardsiella ictaluri 93-146.</title>
        <authorList>
            <person name="Williams M.L."/>
            <person name="Gillaspy A.F."/>
            <person name="Dyer D.W."/>
            <person name="Thune R.L."/>
            <person name="Waldbieser G.C."/>
            <person name="Schuster S.C."/>
            <person name="Gipson J."/>
            <person name="Zaitshik J."/>
            <person name="Landry C."/>
            <person name="Lawrence M.L."/>
        </authorList>
    </citation>
    <scope>NUCLEOTIDE SEQUENCE [LARGE SCALE GENOMIC DNA]</scope>
    <source>
        <strain>93-146</strain>
    </source>
</reference>